<proteinExistence type="inferred from homology"/>
<evidence type="ECO:0000255" key="1">
    <source>
        <dbReference type="HAMAP-Rule" id="MF_01049"/>
    </source>
</evidence>
<accession>C4ZPW6</accession>
<protein>
    <recommendedName>
        <fullName evidence="1">L-carnitine/gamma-butyrobetaine antiporter</fullName>
    </recommendedName>
</protein>
<dbReference type="EMBL" id="CP001396">
    <property type="protein sequence ID" value="ACR65156.1"/>
    <property type="molecule type" value="Genomic_DNA"/>
</dbReference>
<dbReference type="RefSeq" id="WP_000787103.1">
    <property type="nucleotide sequence ID" value="NC_012759.1"/>
</dbReference>
<dbReference type="SMR" id="C4ZPW6"/>
<dbReference type="GeneID" id="93777395"/>
<dbReference type="KEGG" id="ebw:BWG_0038"/>
<dbReference type="HOGENOM" id="CLU_010118_6_0_6"/>
<dbReference type="UniPathway" id="UPA00117"/>
<dbReference type="GO" id="GO:0005886">
    <property type="term" value="C:plasma membrane"/>
    <property type="evidence" value="ECO:0007669"/>
    <property type="project" value="UniProtKB-SubCell"/>
</dbReference>
<dbReference type="GO" id="GO:0044667">
    <property type="term" value="F:(R)-carnitine:4-(trimethylammonio)butanoate antiporter activity"/>
    <property type="evidence" value="ECO:0007669"/>
    <property type="project" value="UniProtKB-UniRule"/>
</dbReference>
<dbReference type="GO" id="GO:1900751">
    <property type="term" value="P:4-(trimethylammonio)butanoate transport"/>
    <property type="evidence" value="ECO:0007669"/>
    <property type="project" value="InterPro"/>
</dbReference>
<dbReference type="GO" id="GO:0009437">
    <property type="term" value="P:carnitine metabolic process"/>
    <property type="evidence" value="ECO:0007669"/>
    <property type="project" value="UniProtKB-UniRule"/>
</dbReference>
<dbReference type="HAMAP" id="MF_01049">
    <property type="entry name" value="CaiT"/>
    <property type="match status" value="1"/>
</dbReference>
<dbReference type="InterPro" id="IPR018093">
    <property type="entry name" value="BCCT_CS"/>
</dbReference>
<dbReference type="InterPro" id="IPR000060">
    <property type="entry name" value="BCCT_transptr"/>
</dbReference>
<dbReference type="InterPro" id="IPR023449">
    <property type="entry name" value="BCCT_transptr_CaiT"/>
</dbReference>
<dbReference type="NCBIfam" id="TIGR00842">
    <property type="entry name" value="bcct"/>
    <property type="match status" value="1"/>
</dbReference>
<dbReference type="NCBIfam" id="NF002887">
    <property type="entry name" value="PRK03356.1"/>
    <property type="match status" value="1"/>
</dbReference>
<dbReference type="PANTHER" id="PTHR30047">
    <property type="entry name" value="HIGH-AFFINITY CHOLINE TRANSPORT PROTEIN-RELATED"/>
    <property type="match status" value="1"/>
</dbReference>
<dbReference type="PANTHER" id="PTHR30047:SF11">
    <property type="entry name" value="L-CARNITINE_GAMMA-BUTYROBETAINE ANTIPORTER"/>
    <property type="match status" value="1"/>
</dbReference>
<dbReference type="Pfam" id="PF02028">
    <property type="entry name" value="BCCT"/>
    <property type="match status" value="1"/>
</dbReference>
<dbReference type="PROSITE" id="PS01303">
    <property type="entry name" value="BCCT"/>
    <property type="match status" value="1"/>
</dbReference>
<name>CAIT_ECOBW</name>
<sequence>MKNEKRKTGIEPKVFFPPLIIVGILCWLTVRDLDAANVVINAVFSYVTNVWGWAFEWYMVVMLFGWFWLVFGPYAKKRLGNEPPEFSTASWIFMMFASCTSAAVLFWGSIEIYYYISTPPFGLEPNSTGAKELGLAYSLFHWGPLPWATYSFLSVAFAYFFFVRKMEVIRPSSTLVPLVGEKHAKGLFGTIVDNFYLVALIFAMGTSLGLATPLVTECMQWLFGIPHTLQLDAIIITCWIILNAICVACGLQKGVRIASDVRSYLSFLMLGWVFIVSGASFIMNYFTDSVGMLLMYLPRMLFYTDPIAKGGFPQGWTVFYWAWWVIYAIQMSIFLARISRGRTVRELCFGMVLGLTASTWILWTVLGSNTLLLIDKNIINIPNLIEQYGVARAIIETWAALPLSTATMWGFFILCFIATVTLVNACSYTLAMSTCREVRDGEEPPLLVRIGWSILVGIIGIVLLALGGLKPIQTAIIAGGCPLFFVNIMVTLSFIKDAKQNWKD</sequence>
<comment type="function">
    <text evidence="1">Catalyzes the exchange of L-carnitine for gamma-butyrobetaine.</text>
</comment>
<comment type="catalytic activity">
    <reaction evidence="1">
        <text>4-(trimethylamino)butanoate(in) + (R)-carnitine(out) = 4-(trimethylamino)butanoate(out) + (R)-carnitine(in)</text>
        <dbReference type="Rhea" id="RHEA:29427"/>
        <dbReference type="ChEBI" id="CHEBI:16244"/>
        <dbReference type="ChEBI" id="CHEBI:16347"/>
    </reaction>
</comment>
<comment type="pathway">
    <text evidence="1">Amine and polyamine metabolism; carnitine metabolism.</text>
</comment>
<comment type="subunit">
    <text evidence="1">Homotrimer.</text>
</comment>
<comment type="subcellular location">
    <subcellularLocation>
        <location evidence="1">Cell inner membrane</location>
        <topology evidence="1">Multi-pass membrane protein</topology>
    </subcellularLocation>
</comment>
<comment type="similarity">
    <text evidence="1">Belongs to the BCCT transporter (TC 2.A.15) family. CaiT subfamily.</text>
</comment>
<keyword id="KW-0050">Antiport</keyword>
<keyword id="KW-0997">Cell inner membrane</keyword>
<keyword id="KW-1003">Cell membrane</keyword>
<keyword id="KW-0472">Membrane</keyword>
<keyword id="KW-0812">Transmembrane</keyword>
<keyword id="KW-1133">Transmembrane helix</keyword>
<keyword id="KW-0813">Transport</keyword>
<gene>
    <name evidence="1" type="primary">caiT</name>
    <name type="ordered locus">BWG_0038</name>
</gene>
<organism>
    <name type="scientific">Escherichia coli (strain K12 / MC4100 / BW2952)</name>
    <dbReference type="NCBI Taxonomy" id="595496"/>
    <lineage>
        <taxon>Bacteria</taxon>
        <taxon>Pseudomonadati</taxon>
        <taxon>Pseudomonadota</taxon>
        <taxon>Gammaproteobacteria</taxon>
        <taxon>Enterobacterales</taxon>
        <taxon>Enterobacteriaceae</taxon>
        <taxon>Escherichia</taxon>
    </lineage>
</organism>
<reference key="1">
    <citation type="journal article" date="2009" name="J. Bacteriol.">
        <title>Genomic sequencing reveals regulatory mutations and recombinational events in the widely used MC4100 lineage of Escherichia coli K-12.</title>
        <authorList>
            <person name="Ferenci T."/>
            <person name="Zhou Z."/>
            <person name="Betteridge T."/>
            <person name="Ren Y."/>
            <person name="Liu Y."/>
            <person name="Feng L."/>
            <person name="Reeves P.R."/>
            <person name="Wang L."/>
        </authorList>
    </citation>
    <scope>NUCLEOTIDE SEQUENCE [LARGE SCALE GENOMIC DNA]</scope>
    <source>
        <strain>K12 / MC4100 / BW2952</strain>
    </source>
</reference>
<feature type="chain" id="PRO_1000213429" description="L-carnitine/gamma-butyrobetaine antiporter">
    <location>
        <begin position="1"/>
        <end position="504"/>
    </location>
</feature>
<feature type="transmembrane region" description="Helical" evidence="1">
    <location>
        <begin position="10"/>
        <end position="30"/>
    </location>
</feature>
<feature type="transmembrane region" description="Helical" evidence="1">
    <location>
        <begin position="51"/>
        <end position="71"/>
    </location>
</feature>
<feature type="transmembrane region" description="Helical" evidence="1">
    <location>
        <begin position="92"/>
        <end position="112"/>
    </location>
</feature>
<feature type="transmembrane region" description="Helical" evidence="1">
    <location>
        <begin position="143"/>
        <end position="163"/>
    </location>
</feature>
<feature type="transmembrane region" description="Helical" evidence="1">
    <location>
        <begin position="195"/>
        <end position="215"/>
    </location>
</feature>
<feature type="transmembrane region" description="Helical" evidence="1">
    <location>
        <begin position="231"/>
        <end position="251"/>
    </location>
</feature>
<feature type="transmembrane region" description="Helical" evidence="1">
    <location>
        <begin position="263"/>
        <end position="283"/>
    </location>
</feature>
<feature type="transmembrane region" description="Helical" evidence="1">
    <location>
        <begin position="316"/>
        <end position="336"/>
    </location>
</feature>
<feature type="transmembrane region" description="Helical" evidence="1">
    <location>
        <begin position="347"/>
        <end position="367"/>
    </location>
</feature>
<feature type="transmembrane region" description="Helical" evidence="1">
    <location>
        <begin position="398"/>
        <end position="418"/>
    </location>
</feature>
<feature type="transmembrane region" description="Helical" evidence="1">
    <location>
        <begin position="446"/>
        <end position="466"/>
    </location>
</feature>
<feature type="transmembrane region" description="Helical" evidence="1">
    <location>
        <begin position="475"/>
        <end position="495"/>
    </location>
</feature>